<proteinExistence type="inferred from homology"/>
<evidence type="ECO:0000255" key="1">
    <source>
        <dbReference type="HAMAP-Rule" id="MF_00473"/>
    </source>
</evidence>
<protein>
    <recommendedName>
        <fullName evidence="1">Glucose-6-phosphate isomerase</fullName>
        <shortName evidence="1">GPI</shortName>
        <ecNumber evidence="1">5.3.1.9</ecNumber>
    </recommendedName>
    <alternativeName>
        <fullName evidence="1">Phosphoglucose isomerase</fullName>
        <shortName evidence="1">PGI</shortName>
    </alternativeName>
    <alternativeName>
        <fullName evidence="1">Phosphohexose isomerase</fullName>
        <shortName evidence="1">PHI</shortName>
    </alternativeName>
</protein>
<organism>
    <name type="scientific">Mycobacterium leprae (strain Br4923)</name>
    <dbReference type="NCBI Taxonomy" id="561304"/>
    <lineage>
        <taxon>Bacteria</taxon>
        <taxon>Bacillati</taxon>
        <taxon>Actinomycetota</taxon>
        <taxon>Actinomycetes</taxon>
        <taxon>Mycobacteriales</taxon>
        <taxon>Mycobacteriaceae</taxon>
        <taxon>Mycobacterium</taxon>
    </lineage>
</organism>
<name>G6PI_MYCLB</name>
<keyword id="KW-0963">Cytoplasm</keyword>
<keyword id="KW-0312">Gluconeogenesis</keyword>
<keyword id="KW-0324">Glycolysis</keyword>
<keyword id="KW-0413">Isomerase</keyword>
<comment type="function">
    <text evidence="1">Catalyzes the reversible isomerization of glucose-6-phosphate to fructose-6-phosphate.</text>
</comment>
<comment type="catalytic activity">
    <reaction evidence="1">
        <text>alpha-D-glucose 6-phosphate = beta-D-fructose 6-phosphate</text>
        <dbReference type="Rhea" id="RHEA:11816"/>
        <dbReference type="ChEBI" id="CHEBI:57634"/>
        <dbReference type="ChEBI" id="CHEBI:58225"/>
        <dbReference type="EC" id="5.3.1.9"/>
    </reaction>
</comment>
<comment type="pathway">
    <text evidence="1">Carbohydrate biosynthesis; gluconeogenesis.</text>
</comment>
<comment type="pathway">
    <text evidence="1">Carbohydrate degradation; glycolysis; D-glyceraldehyde 3-phosphate and glycerone phosphate from D-glucose: step 2/4.</text>
</comment>
<comment type="subcellular location">
    <subcellularLocation>
        <location evidence="1">Cytoplasm</location>
    </subcellularLocation>
</comment>
<comment type="similarity">
    <text evidence="1">Belongs to the GPI family.</text>
</comment>
<reference key="1">
    <citation type="journal article" date="2009" name="Nat. Genet.">
        <title>Comparative genomic and phylogeographic analysis of Mycobacterium leprae.</title>
        <authorList>
            <person name="Monot M."/>
            <person name="Honore N."/>
            <person name="Garnier T."/>
            <person name="Zidane N."/>
            <person name="Sherafi D."/>
            <person name="Paniz-Mondolfi A."/>
            <person name="Matsuoka M."/>
            <person name="Taylor G.M."/>
            <person name="Donoghue H.D."/>
            <person name="Bouwman A."/>
            <person name="Mays S."/>
            <person name="Watson C."/>
            <person name="Lockwood D."/>
            <person name="Khamispour A."/>
            <person name="Dowlati Y."/>
            <person name="Jianping S."/>
            <person name="Rea T.H."/>
            <person name="Vera-Cabrera L."/>
            <person name="Stefani M.M."/>
            <person name="Banu S."/>
            <person name="Macdonald M."/>
            <person name="Sapkota B.R."/>
            <person name="Spencer J.S."/>
            <person name="Thomas J."/>
            <person name="Harshman K."/>
            <person name="Singh P."/>
            <person name="Busso P."/>
            <person name="Gattiker A."/>
            <person name="Rougemont J."/>
            <person name="Brennan P.J."/>
            <person name="Cole S.T."/>
        </authorList>
    </citation>
    <scope>NUCLEOTIDE SEQUENCE [LARGE SCALE GENOMIC DNA]</scope>
    <source>
        <strain>Br4923</strain>
    </source>
</reference>
<feature type="chain" id="PRO_1000135535" description="Glucose-6-phosphate isomerase">
    <location>
        <begin position="1"/>
        <end position="554"/>
    </location>
</feature>
<feature type="active site" description="Proton donor" evidence="1">
    <location>
        <position position="358"/>
    </location>
</feature>
<feature type="active site" evidence="1">
    <location>
        <position position="389"/>
    </location>
</feature>
<feature type="active site" evidence="1">
    <location>
        <position position="515"/>
    </location>
</feature>
<gene>
    <name evidence="1" type="primary">pgi</name>
    <name type="ordered locus">MLBr00150</name>
</gene>
<sequence length="554" mass="60634">MTSMQAIPDITATPAWDALRRHHDEIGATHLRQFFADNPNRGRELVITVGDLYIDYSKHRITHDTVQLLVDLARAANLEQRRDQMLAGVHVNTSENRSVLHTALRLPRDTELIVDGQNVVQDVHAVLDVMGDFTDRLRSGEWTGATGKRINTVVNIGIGGSDLGPVMVYQALRHYADAGISARFVSNIDPADLTAKLSDLEPGTTLFIVASKTFSTLETLTNATAARRWLTDALGEAAVSKHFVAVSTNKRLVKDFGINTANMFGFWEWVGGRYSVDSAIGLSLMAVVGRESFADFLSGFHIVDQHFQNAPLESNAPVLLGLIGLWYSDFLGAQSRAVLPYSNDLARFAAYLQQLTMESNGKSTRADGTPVTTNTGEIYWGETGTNGQHAFYQLLHQGTRLVPADFIGFSQPIDDLPTVDGIGSMHDLLMSNFFAQTQVLAFGKTAEEIAAEGTPAEVVPHKVMPGNRPTTSILANRLTPSVLGQLIALYEHQVFTEGVIWGIDSFDQWGVELGKKQAEALLPVITGNASPAQQLDSSTDTLVRRYRTERGRTS</sequence>
<dbReference type="EC" id="5.3.1.9" evidence="1"/>
<dbReference type="EMBL" id="FM211192">
    <property type="protein sequence ID" value="CAR70243.1"/>
    <property type="molecule type" value="Genomic_DNA"/>
</dbReference>
<dbReference type="SMR" id="B8ZTZ5"/>
<dbReference type="KEGG" id="mlb:MLBr00150"/>
<dbReference type="HOGENOM" id="CLU_017947_3_1_11"/>
<dbReference type="UniPathway" id="UPA00109">
    <property type="reaction ID" value="UER00181"/>
</dbReference>
<dbReference type="UniPathway" id="UPA00138"/>
<dbReference type="Proteomes" id="UP000006900">
    <property type="component" value="Chromosome"/>
</dbReference>
<dbReference type="GO" id="GO:0005829">
    <property type="term" value="C:cytosol"/>
    <property type="evidence" value="ECO:0007669"/>
    <property type="project" value="TreeGrafter"/>
</dbReference>
<dbReference type="GO" id="GO:0097367">
    <property type="term" value="F:carbohydrate derivative binding"/>
    <property type="evidence" value="ECO:0007669"/>
    <property type="project" value="InterPro"/>
</dbReference>
<dbReference type="GO" id="GO:0004347">
    <property type="term" value="F:glucose-6-phosphate isomerase activity"/>
    <property type="evidence" value="ECO:0007669"/>
    <property type="project" value="UniProtKB-UniRule"/>
</dbReference>
<dbReference type="GO" id="GO:0048029">
    <property type="term" value="F:monosaccharide binding"/>
    <property type="evidence" value="ECO:0007669"/>
    <property type="project" value="TreeGrafter"/>
</dbReference>
<dbReference type="GO" id="GO:0006094">
    <property type="term" value="P:gluconeogenesis"/>
    <property type="evidence" value="ECO:0007669"/>
    <property type="project" value="UniProtKB-UniRule"/>
</dbReference>
<dbReference type="GO" id="GO:0051156">
    <property type="term" value="P:glucose 6-phosphate metabolic process"/>
    <property type="evidence" value="ECO:0007669"/>
    <property type="project" value="TreeGrafter"/>
</dbReference>
<dbReference type="GO" id="GO:0006096">
    <property type="term" value="P:glycolytic process"/>
    <property type="evidence" value="ECO:0007669"/>
    <property type="project" value="UniProtKB-UniRule"/>
</dbReference>
<dbReference type="CDD" id="cd05015">
    <property type="entry name" value="SIS_PGI_1"/>
    <property type="match status" value="1"/>
</dbReference>
<dbReference type="CDD" id="cd05016">
    <property type="entry name" value="SIS_PGI_2"/>
    <property type="match status" value="1"/>
</dbReference>
<dbReference type="FunFam" id="3.40.50.10490:FF:000018">
    <property type="entry name" value="Glucose-6-phosphate isomerase"/>
    <property type="match status" value="1"/>
</dbReference>
<dbReference type="Gene3D" id="1.10.1390.10">
    <property type="match status" value="1"/>
</dbReference>
<dbReference type="Gene3D" id="3.40.50.10490">
    <property type="entry name" value="Glucose-6-phosphate isomerase like protein, domain 1"/>
    <property type="match status" value="2"/>
</dbReference>
<dbReference type="HAMAP" id="MF_00473">
    <property type="entry name" value="G6P_isomerase"/>
    <property type="match status" value="1"/>
</dbReference>
<dbReference type="InterPro" id="IPR001672">
    <property type="entry name" value="G6P_Isomerase"/>
</dbReference>
<dbReference type="InterPro" id="IPR023096">
    <property type="entry name" value="G6P_Isomerase_C"/>
</dbReference>
<dbReference type="InterPro" id="IPR018189">
    <property type="entry name" value="Phosphoglucose_isomerase_CS"/>
</dbReference>
<dbReference type="InterPro" id="IPR046348">
    <property type="entry name" value="SIS_dom_sf"/>
</dbReference>
<dbReference type="InterPro" id="IPR035476">
    <property type="entry name" value="SIS_PGI_1"/>
</dbReference>
<dbReference type="InterPro" id="IPR035482">
    <property type="entry name" value="SIS_PGI_2"/>
</dbReference>
<dbReference type="NCBIfam" id="NF001211">
    <property type="entry name" value="PRK00179.1"/>
    <property type="match status" value="1"/>
</dbReference>
<dbReference type="PANTHER" id="PTHR11469">
    <property type="entry name" value="GLUCOSE-6-PHOSPHATE ISOMERASE"/>
    <property type="match status" value="1"/>
</dbReference>
<dbReference type="PANTHER" id="PTHR11469:SF1">
    <property type="entry name" value="GLUCOSE-6-PHOSPHATE ISOMERASE"/>
    <property type="match status" value="1"/>
</dbReference>
<dbReference type="Pfam" id="PF00342">
    <property type="entry name" value="PGI"/>
    <property type="match status" value="1"/>
</dbReference>
<dbReference type="PRINTS" id="PR00662">
    <property type="entry name" value="G6PISOMERASE"/>
</dbReference>
<dbReference type="SUPFAM" id="SSF53697">
    <property type="entry name" value="SIS domain"/>
    <property type="match status" value="1"/>
</dbReference>
<dbReference type="PROSITE" id="PS00765">
    <property type="entry name" value="P_GLUCOSE_ISOMERASE_1"/>
    <property type="match status" value="1"/>
</dbReference>
<dbReference type="PROSITE" id="PS00174">
    <property type="entry name" value="P_GLUCOSE_ISOMERASE_2"/>
    <property type="match status" value="1"/>
</dbReference>
<dbReference type="PROSITE" id="PS51463">
    <property type="entry name" value="P_GLUCOSE_ISOMERASE_3"/>
    <property type="match status" value="1"/>
</dbReference>
<accession>B8ZTZ5</accession>